<dbReference type="EMBL" id="CP000745">
    <property type="protein sequence ID" value="ABR66310.1"/>
    <property type="molecule type" value="Genomic_DNA"/>
</dbReference>
<dbReference type="SMR" id="A6VIN4"/>
<dbReference type="STRING" id="426368.MmarC7_1247"/>
<dbReference type="KEGG" id="mmz:MmarC7_1247"/>
<dbReference type="eggNOG" id="arCOG01342">
    <property type="taxonomic scope" value="Archaea"/>
</dbReference>
<dbReference type="HOGENOM" id="CLU_131909_0_1_2"/>
<dbReference type="OrthoDB" id="60701at2157"/>
<dbReference type="GO" id="GO:0005737">
    <property type="term" value="C:cytoplasm"/>
    <property type="evidence" value="ECO:0007669"/>
    <property type="project" value="UniProtKB-SubCell"/>
</dbReference>
<dbReference type="GO" id="GO:0016272">
    <property type="term" value="C:prefoldin complex"/>
    <property type="evidence" value="ECO:0007669"/>
    <property type="project" value="UniProtKB-UniRule"/>
</dbReference>
<dbReference type="GO" id="GO:0051082">
    <property type="term" value="F:unfolded protein binding"/>
    <property type="evidence" value="ECO:0007669"/>
    <property type="project" value="UniProtKB-UniRule"/>
</dbReference>
<dbReference type="GO" id="GO:0006457">
    <property type="term" value="P:protein folding"/>
    <property type="evidence" value="ECO:0007669"/>
    <property type="project" value="UniProtKB-UniRule"/>
</dbReference>
<dbReference type="CDD" id="cd23162">
    <property type="entry name" value="Prefoldin_beta_GimC"/>
    <property type="match status" value="1"/>
</dbReference>
<dbReference type="Gene3D" id="1.10.287.370">
    <property type="match status" value="1"/>
</dbReference>
<dbReference type="HAMAP" id="MF_00307">
    <property type="entry name" value="PfdB"/>
    <property type="match status" value="1"/>
</dbReference>
<dbReference type="InterPro" id="IPR002777">
    <property type="entry name" value="PFD_beta-like"/>
</dbReference>
<dbReference type="InterPro" id="IPR012713">
    <property type="entry name" value="PfdB"/>
</dbReference>
<dbReference type="InterPro" id="IPR009053">
    <property type="entry name" value="Prefoldin"/>
</dbReference>
<dbReference type="NCBIfam" id="TIGR02338">
    <property type="entry name" value="gimC_beta"/>
    <property type="match status" value="1"/>
</dbReference>
<dbReference type="Pfam" id="PF01920">
    <property type="entry name" value="Prefoldin_2"/>
    <property type="match status" value="1"/>
</dbReference>
<dbReference type="SUPFAM" id="SSF46579">
    <property type="entry name" value="Prefoldin"/>
    <property type="match status" value="1"/>
</dbReference>
<name>PFDB_METM7</name>
<sequence length="113" mass="13432">MELPANVQNQLMQFQQLQQQLQMIMYQKQQFETQLKEMEKAIEEMEKSGSDEVFKMAGGILIKRNKAEVKEELSERVETLQLRVTTFEKQEEKMQKRYTELQENLQKAMGQGQ</sequence>
<comment type="function">
    <text evidence="1">Molecular chaperone capable of stabilizing a range of proteins. Seems to fulfill an ATP-independent, HSP70-like function in archaeal de novo protein folding.</text>
</comment>
<comment type="subunit">
    <text evidence="1">Heterohexamer of two alpha and four beta subunits.</text>
</comment>
<comment type="subcellular location">
    <subcellularLocation>
        <location evidence="1">Cytoplasm</location>
    </subcellularLocation>
</comment>
<comment type="similarity">
    <text evidence="1">Belongs to the prefoldin subunit beta family.</text>
</comment>
<evidence type="ECO:0000255" key="1">
    <source>
        <dbReference type="HAMAP-Rule" id="MF_00307"/>
    </source>
</evidence>
<keyword id="KW-0143">Chaperone</keyword>
<keyword id="KW-0963">Cytoplasm</keyword>
<gene>
    <name evidence="1" type="primary">pfdB</name>
    <name type="ordered locus">MmarC7_1247</name>
</gene>
<feature type="chain" id="PRO_1000022794" description="Prefoldin subunit beta">
    <location>
        <begin position="1"/>
        <end position="113"/>
    </location>
</feature>
<protein>
    <recommendedName>
        <fullName evidence="1">Prefoldin subunit beta</fullName>
    </recommendedName>
    <alternativeName>
        <fullName evidence="1">GimC subunit beta</fullName>
    </alternativeName>
</protein>
<organism>
    <name type="scientific">Methanococcus maripaludis (strain C7 / ATCC BAA-1331)</name>
    <dbReference type="NCBI Taxonomy" id="426368"/>
    <lineage>
        <taxon>Archaea</taxon>
        <taxon>Methanobacteriati</taxon>
        <taxon>Methanobacteriota</taxon>
        <taxon>Methanomada group</taxon>
        <taxon>Methanococci</taxon>
        <taxon>Methanococcales</taxon>
        <taxon>Methanococcaceae</taxon>
        <taxon>Methanococcus</taxon>
    </lineage>
</organism>
<reference key="1">
    <citation type="submission" date="2007-06" db="EMBL/GenBank/DDBJ databases">
        <title>Complete sequence of Methanococcus maripaludis C7.</title>
        <authorList>
            <consortium name="US DOE Joint Genome Institute"/>
            <person name="Copeland A."/>
            <person name="Lucas S."/>
            <person name="Lapidus A."/>
            <person name="Barry K."/>
            <person name="Glavina del Rio T."/>
            <person name="Dalin E."/>
            <person name="Tice H."/>
            <person name="Pitluck S."/>
            <person name="Clum A."/>
            <person name="Schmutz J."/>
            <person name="Larimer F."/>
            <person name="Land M."/>
            <person name="Hauser L."/>
            <person name="Kyrpides N."/>
            <person name="Anderson I."/>
            <person name="Sieprawska-Lupa M."/>
            <person name="Whitman W.B."/>
            <person name="Richardson P."/>
        </authorList>
    </citation>
    <scope>NUCLEOTIDE SEQUENCE [LARGE SCALE GENOMIC DNA]</scope>
    <source>
        <strain>C7 / ATCC BAA-1331</strain>
    </source>
</reference>
<proteinExistence type="inferred from homology"/>
<accession>A6VIN4</accession>